<dbReference type="EC" id="3.1.3.11" evidence="1"/>
<dbReference type="EMBL" id="AM286415">
    <property type="protein sequence ID" value="CAL10537.1"/>
    <property type="molecule type" value="Genomic_DNA"/>
</dbReference>
<dbReference type="RefSeq" id="WP_004875434.1">
    <property type="nucleotide sequence ID" value="NC_008800.1"/>
</dbReference>
<dbReference type="RefSeq" id="YP_001004782.1">
    <property type="nucleotide sequence ID" value="NC_008800.1"/>
</dbReference>
<dbReference type="SMR" id="A1JIU6"/>
<dbReference type="GeneID" id="93968889"/>
<dbReference type="KEGG" id="yen:YE0410"/>
<dbReference type="PATRIC" id="fig|393305.7.peg.506"/>
<dbReference type="eggNOG" id="COG0158">
    <property type="taxonomic scope" value="Bacteria"/>
</dbReference>
<dbReference type="HOGENOM" id="CLU_039977_2_2_6"/>
<dbReference type="OrthoDB" id="9806756at2"/>
<dbReference type="UniPathway" id="UPA00138"/>
<dbReference type="Proteomes" id="UP000000642">
    <property type="component" value="Chromosome"/>
</dbReference>
<dbReference type="GO" id="GO:0005829">
    <property type="term" value="C:cytosol"/>
    <property type="evidence" value="ECO:0007669"/>
    <property type="project" value="TreeGrafter"/>
</dbReference>
<dbReference type="GO" id="GO:0042132">
    <property type="term" value="F:fructose 1,6-bisphosphate 1-phosphatase activity"/>
    <property type="evidence" value="ECO:0007669"/>
    <property type="project" value="UniProtKB-UniRule"/>
</dbReference>
<dbReference type="GO" id="GO:0000287">
    <property type="term" value="F:magnesium ion binding"/>
    <property type="evidence" value="ECO:0007669"/>
    <property type="project" value="UniProtKB-UniRule"/>
</dbReference>
<dbReference type="GO" id="GO:0030388">
    <property type="term" value="P:fructose 1,6-bisphosphate metabolic process"/>
    <property type="evidence" value="ECO:0007669"/>
    <property type="project" value="TreeGrafter"/>
</dbReference>
<dbReference type="GO" id="GO:0006002">
    <property type="term" value="P:fructose 6-phosphate metabolic process"/>
    <property type="evidence" value="ECO:0007669"/>
    <property type="project" value="TreeGrafter"/>
</dbReference>
<dbReference type="GO" id="GO:0006000">
    <property type="term" value="P:fructose metabolic process"/>
    <property type="evidence" value="ECO:0007669"/>
    <property type="project" value="TreeGrafter"/>
</dbReference>
<dbReference type="GO" id="GO:0006094">
    <property type="term" value="P:gluconeogenesis"/>
    <property type="evidence" value="ECO:0007669"/>
    <property type="project" value="UniProtKB-UniRule"/>
</dbReference>
<dbReference type="GO" id="GO:0005986">
    <property type="term" value="P:sucrose biosynthetic process"/>
    <property type="evidence" value="ECO:0007669"/>
    <property type="project" value="TreeGrafter"/>
</dbReference>
<dbReference type="CDD" id="cd00354">
    <property type="entry name" value="FBPase"/>
    <property type="match status" value="1"/>
</dbReference>
<dbReference type="FunFam" id="3.30.540.10:FF:000002">
    <property type="entry name" value="Fructose-1,6-bisphosphatase class 1"/>
    <property type="match status" value="1"/>
</dbReference>
<dbReference type="FunFam" id="3.40.190.80:FF:000001">
    <property type="entry name" value="Fructose-1,6-bisphosphatase class 1"/>
    <property type="match status" value="1"/>
</dbReference>
<dbReference type="Gene3D" id="3.40.190.80">
    <property type="match status" value="1"/>
</dbReference>
<dbReference type="Gene3D" id="3.30.540.10">
    <property type="entry name" value="Fructose-1,6-Bisphosphatase, subunit A, domain 1"/>
    <property type="match status" value="1"/>
</dbReference>
<dbReference type="HAMAP" id="MF_01855">
    <property type="entry name" value="FBPase_class1"/>
    <property type="match status" value="1"/>
</dbReference>
<dbReference type="InterPro" id="IPR044015">
    <property type="entry name" value="FBPase_C_dom"/>
</dbReference>
<dbReference type="InterPro" id="IPR000146">
    <property type="entry name" value="FBPase_class-1"/>
</dbReference>
<dbReference type="InterPro" id="IPR033391">
    <property type="entry name" value="FBPase_N"/>
</dbReference>
<dbReference type="InterPro" id="IPR028343">
    <property type="entry name" value="FBPtase"/>
</dbReference>
<dbReference type="InterPro" id="IPR020548">
    <property type="entry name" value="Fructose_bisphosphatase_AS"/>
</dbReference>
<dbReference type="NCBIfam" id="NF006778">
    <property type="entry name" value="PRK09293.1-1"/>
    <property type="match status" value="1"/>
</dbReference>
<dbReference type="PANTHER" id="PTHR11556">
    <property type="entry name" value="FRUCTOSE-1,6-BISPHOSPHATASE-RELATED"/>
    <property type="match status" value="1"/>
</dbReference>
<dbReference type="PANTHER" id="PTHR11556:SF35">
    <property type="entry name" value="SEDOHEPTULOSE-1,7-BISPHOSPHATASE, CHLOROPLASTIC"/>
    <property type="match status" value="1"/>
</dbReference>
<dbReference type="Pfam" id="PF00316">
    <property type="entry name" value="FBPase"/>
    <property type="match status" value="1"/>
</dbReference>
<dbReference type="Pfam" id="PF18913">
    <property type="entry name" value="FBPase_C"/>
    <property type="match status" value="1"/>
</dbReference>
<dbReference type="PIRSF" id="PIRSF500210">
    <property type="entry name" value="FBPtase"/>
    <property type="match status" value="1"/>
</dbReference>
<dbReference type="PIRSF" id="PIRSF000904">
    <property type="entry name" value="FBPtase_SBPase"/>
    <property type="match status" value="1"/>
</dbReference>
<dbReference type="PRINTS" id="PR00115">
    <property type="entry name" value="F16BPHPHTASE"/>
</dbReference>
<dbReference type="SUPFAM" id="SSF56655">
    <property type="entry name" value="Carbohydrate phosphatase"/>
    <property type="match status" value="1"/>
</dbReference>
<dbReference type="PROSITE" id="PS00124">
    <property type="entry name" value="FBPASE"/>
    <property type="match status" value="1"/>
</dbReference>
<sequence>MKTLGEFIVEKQLDFSHATGELTALLSAIKLGAKIIHRDINKAGLVDILGASGVSNIQGEDQMKLDLFANEKLKAALKARGEVAGIASEEEDDIVIFDGGRAENAKYVVLMDPLDGSSNIDVNVSVGTIFSIYRRITPFGTPITEADFLQPGTKQVAAGYVVYGSSTMLVYTTGYGVHTFTYDPSLGVFCLSGEKVRYPATGCMYSINEGNYIKFPLGVKKYIKYCQEQDEATQRPYTSRYIGSLVADFHRNLLKGGIYIYPSTASHPQGKLRLLYECNPMAFLAEQAGGKATDGVNRILDIVPEKLHQRAPFFVGTKSMVEDAEGFIAKFPDEEAK</sequence>
<feature type="chain" id="PRO_0000364758" description="Fructose-1,6-bisphosphatase class 1">
    <location>
        <begin position="1"/>
        <end position="337"/>
    </location>
</feature>
<feature type="binding site" evidence="1">
    <location>
        <position position="89"/>
    </location>
    <ligand>
        <name>Mg(2+)</name>
        <dbReference type="ChEBI" id="CHEBI:18420"/>
        <label>1</label>
    </ligand>
</feature>
<feature type="binding site" evidence="1">
    <location>
        <position position="112"/>
    </location>
    <ligand>
        <name>Mg(2+)</name>
        <dbReference type="ChEBI" id="CHEBI:18420"/>
        <label>1</label>
    </ligand>
</feature>
<feature type="binding site" evidence="1">
    <location>
        <position position="112"/>
    </location>
    <ligand>
        <name>Mg(2+)</name>
        <dbReference type="ChEBI" id="CHEBI:18420"/>
        <label>2</label>
    </ligand>
</feature>
<feature type="binding site" evidence="1">
    <location>
        <position position="114"/>
    </location>
    <ligand>
        <name>Mg(2+)</name>
        <dbReference type="ChEBI" id="CHEBI:18420"/>
        <label>1</label>
    </ligand>
</feature>
<feature type="binding site" evidence="1">
    <location>
        <begin position="115"/>
        <end position="118"/>
    </location>
    <ligand>
        <name>substrate</name>
    </ligand>
</feature>
<feature type="binding site" evidence="1">
    <location>
        <position position="115"/>
    </location>
    <ligand>
        <name>Mg(2+)</name>
        <dbReference type="ChEBI" id="CHEBI:18420"/>
        <label>2</label>
    </ligand>
</feature>
<feature type="binding site" evidence="1">
    <location>
        <position position="208"/>
    </location>
    <ligand>
        <name>substrate</name>
    </ligand>
</feature>
<feature type="binding site" evidence="1">
    <location>
        <position position="241"/>
    </location>
    <ligand>
        <name>substrate</name>
    </ligand>
</feature>
<feature type="binding site" evidence="1">
    <location>
        <position position="271"/>
    </location>
    <ligand>
        <name>substrate</name>
    </ligand>
</feature>
<feature type="binding site" evidence="1">
    <location>
        <position position="277"/>
    </location>
    <ligand>
        <name>Mg(2+)</name>
        <dbReference type="ChEBI" id="CHEBI:18420"/>
        <label>2</label>
    </ligand>
</feature>
<evidence type="ECO:0000255" key="1">
    <source>
        <dbReference type="HAMAP-Rule" id="MF_01855"/>
    </source>
</evidence>
<gene>
    <name evidence="1" type="primary">fbp</name>
    <name type="ordered locus">YE0410</name>
</gene>
<comment type="catalytic activity">
    <reaction evidence="1">
        <text>beta-D-fructose 1,6-bisphosphate + H2O = beta-D-fructose 6-phosphate + phosphate</text>
        <dbReference type="Rhea" id="RHEA:11064"/>
        <dbReference type="ChEBI" id="CHEBI:15377"/>
        <dbReference type="ChEBI" id="CHEBI:32966"/>
        <dbReference type="ChEBI" id="CHEBI:43474"/>
        <dbReference type="ChEBI" id="CHEBI:57634"/>
        <dbReference type="EC" id="3.1.3.11"/>
    </reaction>
</comment>
<comment type="cofactor">
    <cofactor evidence="1">
        <name>Mg(2+)</name>
        <dbReference type="ChEBI" id="CHEBI:18420"/>
    </cofactor>
    <text evidence="1">Binds 2 magnesium ions per subunit.</text>
</comment>
<comment type="pathway">
    <text evidence="1">Carbohydrate biosynthesis; gluconeogenesis.</text>
</comment>
<comment type="subunit">
    <text evidence="1">Homotetramer.</text>
</comment>
<comment type="subcellular location">
    <subcellularLocation>
        <location evidence="1">Cytoplasm</location>
    </subcellularLocation>
</comment>
<comment type="similarity">
    <text evidence="1">Belongs to the FBPase class 1 family.</text>
</comment>
<organism>
    <name type="scientific">Yersinia enterocolitica serotype O:8 / biotype 1B (strain NCTC 13174 / 8081)</name>
    <dbReference type="NCBI Taxonomy" id="393305"/>
    <lineage>
        <taxon>Bacteria</taxon>
        <taxon>Pseudomonadati</taxon>
        <taxon>Pseudomonadota</taxon>
        <taxon>Gammaproteobacteria</taxon>
        <taxon>Enterobacterales</taxon>
        <taxon>Yersiniaceae</taxon>
        <taxon>Yersinia</taxon>
    </lineage>
</organism>
<accession>A1JIU6</accession>
<keyword id="KW-0119">Carbohydrate metabolism</keyword>
<keyword id="KW-0963">Cytoplasm</keyword>
<keyword id="KW-0378">Hydrolase</keyword>
<keyword id="KW-0460">Magnesium</keyword>
<keyword id="KW-0479">Metal-binding</keyword>
<protein>
    <recommendedName>
        <fullName evidence="1">Fructose-1,6-bisphosphatase class 1</fullName>
        <shortName evidence="1">FBPase class 1</shortName>
        <ecNumber evidence="1">3.1.3.11</ecNumber>
    </recommendedName>
    <alternativeName>
        <fullName evidence="1">D-fructose-1,6-bisphosphate 1-phosphohydrolase class 1</fullName>
    </alternativeName>
</protein>
<name>F16PA_YERE8</name>
<proteinExistence type="inferred from homology"/>
<reference key="1">
    <citation type="journal article" date="2006" name="PLoS Genet.">
        <title>The complete genome sequence and comparative genome analysis of the high pathogenicity Yersinia enterocolitica strain 8081.</title>
        <authorList>
            <person name="Thomson N.R."/>
            <person name="Howard S."/>
            <person name="Wren B.W."/>
            <person name="Holden M.T.G."/>
            <person name="Crossman L."/>
            <person name="Challis G.L."/>
            <person name="Churcher C."/>
            <person name="Mungall K."/>
            <person name="Brooks K."/>
            <person name="Chillingworth T."/>
            <person name="Feltwell T."/>
            <person name="Abdellah Z."/>
            <person name="Hauser H."/>
            <person name="Jagels K."/>
            <person name="Maddison M."/>
            <person name="Moule S."/>
            <person name="Sanders M."/>
            <person name="Whitehead S."/>
            <person name="Quail M.A."/>
            <person name="Dougan G."/>
            <person name="Parkhill J."/>
            <person name="Prentice M.B."/>
        </authorList>
    </citation>
    <scope>NUCLEOTIDE SEQUENCE [LARGE SCALE GENOMIC DNA]</scope>
    <source>
        <strain>NCTC 13174 / 8081</strain>
    </source>
</reference>